<accession>P0DSX7</accession>
<accession>P33847</accession>
<dbReference type="EMBL" id="X69198">
    <property type="protein sequence ID" value="CAA49076.1"/>
    <property type="molecule type" value="Genomic_DNA"/>
</dbReference>
<dbReference type="EMBL" id="X67115">
    <property type="protein sequence ID" value="CAA47502.1"/>
    <property type="molecule type" value="Genomic_DNA"/>
</dbReference>
<dbReference type="PIR" id="S46858">
    <property type="entry name" value="S46858"/>
</dbReference>
<dbReference type="RefSeq" id="NP_042179.1">
    <property type="nucleotide sequence ID" value="NC_001611.1"/>
</dbReference>
<dbReference type="SMR" id="P0DSX7"/>
<dbReference type="GeneID" id="1486509"/>
<dbReference type="KEGG" id="vg:1486509"/>
<dbReference type="Proteomes" id="UP000002060">
    <property type="component" value="Segment"/>
</dbReference>
<dbReference type="GO" id="GO:0016020">
    <property type="term" value="C:membrane"/>
    <property type="evidence" value="ECO:0007669"/>
    <property type="project" value="UniProtKB-KW"/>
</dbReference>
<dbReference type="GO" id="GO:0019031">
    <property type="term" value="C:viral envelope"/>
    <property type="evidence" value="ECO:0007669"/>
    <property type="project" value="InterPro"/>
</dbReference>
<dbReference type="GO" id="GO:0055036">
    <property type="term" value="C:virion membrane"/>
    <property type="evidence" value="ECO:0007669"/>
    <property type="project" value="UniProtKB-SubCell"/>
</dbReference>
<dbReference type="GO" id="GO:0039663">
    <property type="term" value="P:membrane fusion involved in viral entry into host cell"/>
    <property type="evidence" value="ECO:0007669"/>
    <property type="project" value="UniProtKB-KW"/>
</dbReference>
<dbReference type="GO" id="GO:0046718">
    <property type="term" value="P:symbiont entry into host cell"/>
    <property type="evidence" value="ECO:0007669"/>
    <property type="project" value="UniProtKB-KW"/>
</dbReference>
<dbReference type="InterPro" id="IPR007664">
    <property type="entry name" value="Poxvirus_A28"/>
</dbReference>
<dbReference type="Pfam" id="PF04584">
    <property type="entry name" value="Pox_A28"/>
    <property type="match status" value="1"/>
</dbReference>
<protein>
    <recommendedName>
        <fullName>Envelope protein OPG155</fullName>
    </recommendedName>
    <alternativeName>
        <fullName>Protein A31</fullName>
    </alternativeName>
</protein>
<gene>
    <name type="primary">OPG155</name>
    <name type="ORF">A31.5L</name>
    <name type="ORF">A31L</name>
    <name type="ORF">A32L</name>
</gene>
<name>PG155_VAR67</name>
<proteinExistence type="inferred from homology"/>
<comment type="function">
    <text evidence="1">Envelope protein required for virus entry into host cell and for cell-cell fusion (syncytium formation).</text>
</comment>
<comment type="subunit">
    <text evidence="1">Part of a stable entry-fusion complex (EFC) which is at least composed of proteins OPG143, OPG147, OPG155, OPG086, OPG094, OPG107, OPG104, and OPG099. Formation of the viral membrane is necessary for the assembly of the complex. Interacts directly with protein OPG107.</text>
</comment>
<comment type="subcellular location">
    <subcellularLocation>
        <location evidence="1">Virion membrane</location>
        <topology evidence="1">Single-pass type III membrane protein</topology>
    </subcellularLocation>
    <text evidence="1">Component of the mature virion (MV) membrane.</text>
</comment>
<comment type="PTM">
    <text evidence="1">Contains two intramolecular disulfide bonds. They are created by the viral disulfide bond formation pathway, a poxvirus-specific pathway that operates on the cytoplasmic side of the MV membranes.</text>
</comment>
<comment type="similarity">
    <text evidence="3">Belongs to the orthopoxvirus OPG155 protein family.</text>
</comment>
<organism>
    <name type="scientific">Variola virus (isolate Human/India/Ind3/1967)</name>
    <name type="common">VARV</name>
    <name type="synonym">Smallpox virus</name>
    <dbReference type="NCBI Taxonomy" id="587200"/>
    <lineage>
        <taxon>Viruses</taxon>
        <taxon>Varidnaviria</taxon>
        <taxon>Bamfordvirae</taxon>
        <taxon>Nucleocytoviricota</taxon>
        <taxon>Pokkesviricetes</taxon>
        <taxon>Chitovirales</taxon>
        <taxon>Poxviridae</taxon>
        <taxon>Chordopoxvirinae</taxon>
        <taxon>Orthopoxvirus</taxon>
        <taxon>Variola virus</taxon>
    </lineage>
</organism>
<keyword id="KW-1015">Disulfide bond</keyword>
<keyword id="KW-1168">Fusion of virus membrane with host membrane</keyword>
<keyword id="KW-0426">Late protein</keyword>
<keyword id="KW-0472">Membrane</keyword>
<keyword id="KW-0597">Phosphoprotein</keyword>
<keyword id="KW-1185">Reference proteome</keyword>
<keyword id="KW-0735">Signal-anchor</keyword>
<keyword id="KW-0812">Transmembrane</keyword>
<keyword id="KW-1133">Transmembrane helix</keyword>
<keyword id="KW-1162">Viral penetration into host cytoplasm</keyword>
<keyword id="KW-0946">Virion</keyword>
<keyword id="KW-1160">Virus entry into host cell</keyword>
<sequence>MNSLSIFFIVVATAAVCLLFIQGYSIYENYGNIKEFNATHAAFEYSKSIGGTPALDRRVQDVNDTISDVKQKWRCVAYPGNGFVSASIFGFQAEVGPNNTRSIRKFNTMAQCIDFTFSDVINIDIYNPCVAPNINNVECQFLKSVL</sequence>
<feature type="chain" id="PRO_0000099301" description="Envelope protein OPG155">
    <location>
        <begin position="1"/>
        <end position="146"/>
    </location>
</feature>
<feature type="transmembrane region" description="Helical; Signal-anchor for type III membrane protein" evidence="2">
    <location>
        <begin position="1"/>
        <end position="21"/>
    </location>
</feature>
<feature type="topological domain" description="Intravirion" evidence="2">
    <location>
        <begin position="22"/>
        <end position="146"/>
    </location>
</feature>
<evidence type="ECO:0000250" key="1">
    <source>
        <dbReference type="UniProtKB" id="P68633"/>
    </source>
</evidence>
<evidence type="ECO:0000255" key="2"/>
<evidence type="ECO:0000305" key="3"/>
<organismHost>
    <name type="scientific">Homo sapiens</name>
    <name type="common">Human</name>
    <dbReference type="NCBI Taxonomy" id="9606"/>
</organismHost>
<reference key="1">
    <citation type="journal article" date="1991" name="Dokl. Akad. Nauk SSSR">
        <title>Creation of a clone library of fragments from the natural variola virus and study of the structural and functional organization of viral genes from a circle of hosts.</title>
        <authorList>
            <person name="Shchelkunov S.N."/>
            <person name="Marennikova S.S."/>
            <person name="Totmenin A.V."/>
            <person name="Blinov V.M."/>
            <person name="Chizhikov V.E."/>
            <person name="Gutorov V.V."/>
            <person name="Safronov P.F."/>
            <person name="Pozdnyakov S.G."/>
            <person name="Shelukhina E.M."/>
            <person name="Gashnikov P.V."/>
            <person name="Anjaparidze O.G."/>
            <person name="Sandakhchiev L.S."/>
        </authorList>
    </citation>
    <scope>NUCLEOTIDE SEQUENCE [GENOMIC DNA]</scope>
</reference>
<reference key="2">
    <citation type="journal article" date="1993" name="FEBS Lett.">
        <title>Genes of variola and vaccinia viruses necessary to overcome the host protective mechanisms.</title>
        <authorList>
            <person name="Shchelkunov S.N."/>
            <person name="Blinov V.M."/>
            <person name="Sandakhchiev L.S."/>
        </authorList>
    </citation>
    <scope>NUCLEOTIDE SEQUENCE [GENOMIC DNA]</scope>
</reference>